<sequence length="154" mass="15884">MVKAVAVVRGDSNVKGTVIFEQESESAPTTITYDISGNDPNAKRGFHIHTFGDNTNGCTSAGPHFNPHGTTHGDRTAEVRHVGDLGNIETDAQGNAKGTVTDNLVKLIGPESVIGRTVVVHAGTDDLGKGGNEESLKTGNAGPRPACGVIGISQ</sequence>
<reference key="1">
    <citation type="journal article" date="1990" name="J. Biol. Chem.">
        <title>Structure, exon pattern, and chromosome mapping of the gene for cytosolic copper-zinc superoxide dismutase (sod-1) from Neurospora crassa.</title>
        <authorList>
            <person name="Chary P."/>
            <person name="Hallewell R.A."/>
            <person name="Natvig D.O."/>
        </authorList>
    </citation>
    <scope>NUCLEOTIDE SEQUENCE [GENOMIC DNA]</scope>
</reference>
<reference key="2">
    <citation type="journal article" date="2003" name="Nature">
        <title>The genome sequence of the filamentous fungus Neurospora crassa.</title>
        <authorList>
            <person name="Galagan J.E."/>
            <person name="Calvo S.E."/>
            <person name="Borkovich K.A."/>
            <person name="Selker E.U."/>
            <person name="Read N.D."/>
            <person name="Jaffe D.B."/>
            <person name="FitzHugh W."/>
            <person name="Ma L.-J."/>
            <person name="Smirnov S."/>
            <person name="Purcell S."/>
            <person name="Rehman B."/>
            <person name="Elkins T."/>
            <person name="Engels R."/>
            <person name="Wang S."/>
            <person name="Nielsen C.B."/>
            <person name="Butler J."/>
            <person name="Endrizzi M."/>
            <person name="Qui D."/>
            <person name="Ianakiev P."/>
            <person name="Bell-Pedersen D."/>
            <person name="Nelson M.A."/>
            <person name="Werner-Washburne M."/>
            <person name="Selitrennikoff C.P."/>
            <person name="Kinsey J.A."/>
            <person name="Braun E.L."/>
            <person name="Zelter A."/>
            <person name="Schulte U."/>
            <person name="Kothe G.O."/>
            <person name="Jedd G."/>
            <person name="Mewes H.-W."/>
            <person name="Staben C."/>
            <person name="Marcotte E."/>
            <person name="Greenberg D."/>
            <person name="Roy A."/>
            <person name="Foley K."/>
            <person name="Naylor J."/>
            <person name="Stange-Thomann N."/>
            <person name="Barrett R."/>
            <person name="Gnerre S."/>
            <person name="Kamal M."/>
            <person name="Kamvysselis M."/>
            <person name="Mauceli E.W."/>
            <person name="Bielke C."/>
            <person name="Rudd S."/>
            <person name="Frishman D."/>
            <person name="Krystofova S."/>
            <person name="Rasmussen C."/>
            <person name="Metzenberg R.L."/>
            <person name="Perkins D.D."/>
            <person name="Kroken S."/>
            <person name="Cogoni C."/>
            <person name="Macino G."/>
            <person name="Catcheside D.E.A."/>
            <person name="Li W."/>
            <person name="Pratt R.J."/>
            <person name="Osmani S.A."/>
            <person name="DeSouza C.P.C."/>
            <person name="Glass N.L."/>
            <person name="Orbach M.J."/>
            <person name="Berglund J.A."/>
            <person name="Voelker R."/>
            <person name="Yarden O."/>
            <person name="Plamann M."/>
            <person name="Seiler S."/>
            <person name="Dunlap J.C."/>
            <person name="Radford A."/>
            <person name="Aramayo R."/>
            <person name="Natvig D.O."/>
            <person name="Alex L.A."/>
            <person name="Mannhaupt G."/>
            <person name="Ebbole D.J."/>
            <person name="Freitag M."/>
            <person name="Paulsen I."/>
            <person name="Sachs M.S."/>
            <person name="Lander E.S."/>
            <person name="Nusbaum C."/>
            <person name="Birren B.W."/>
        </authorList>
    </citation>
    <scope>NUCLEOTIDE SEQUENCE [LARGE SCALE GENOMIC DNA]</scope>
    <source>
        <strain>ATCC 24698 / 74-OR23-1A / CBS 708.71 / DSM 1257 / FGSC 987</strain>
    </source>
</reference>
<reference key="3">
    <citation type="journal article" date="1985" name="J. Biol. Chem.">
        <title>Primary structure of copper-zinc superoxide dismutase from Neurospora crassa.</title>
        <authorList>
            <person name="Lerch K."/>
            <person name="Schenk E."/>
        </authorList>
    </citation>
    <scope>PROTEIN SEQUENCE OF 2-154</scope>
</reference>
<evidence type="ECO:0000250" key="1">
    <source>
        <dbReference type="UniProtKB" id="P00442"/>
    </source>
</evidence>
<evidence type="ECO:0000250" key="2">
    <source>
        <dbReference type="UniProtKB" id="P00445"/>
    </source>
</evidence>
<evidence type="ECO:0000250" key="3">
    <source>
        <dbReference type="UniProtKB" id="P85978"/>
    </source>
</evidence>
<evidence type="ECO:0000256" key="4">
    <source>
        <dbReference type="SAM" id="MobiDB-lite"/>
    </source>
</evidence>
<evidence type="ECO:0000269" key="5">
    <source>
    </source>
</evidence>
<evidence type="ECO:0000305" key="6"/>
<dbReference type="EC" id="1.15.1.1" evidence="3"/>
<dbReference type="EMBL" id="M58687">
    <property type="protein sequence ID" value="AAA63780.1"/>
    <property type="molecule type" value="Genomic_DNA"/>
</dbReference>
<dbReference type="EMBL" id="CM002236">
    <property type="protein sequence ID" value="EAA35055.2"/>
    <property type="molecule type" value="Genomic_DNA"/>
</dbReference>
<dbReference type="PIR" id="A36591">
    <property type="entry name" value="A36591"/>
</dbReference>
<dbReference type="RefSeq" id="XP_964291.2">
    <property type="nucleotide sequence ID" value="XM_959198.3"/>
</dbReference>
<dbReference type="SMR" id="P07509"/>
<dbReference type="FunCoup" id="P07509">
    <property type="interactions" value="754"/>
</dbReference>
<dbReference type="STRING" id="367110.P07509"/>
<dbReference type="PaxDb" id="5141-EFNCRP00000001091"/>
<dbReference type="EnsemblFungi" id="EAA35055">
    <property type="protein sequence ID" value="EAA35055"/>
    <property type="gene ID" value="NCU02133"/>
</dbReference>
<dbReference type="GeneID" id="3880431"/>
<dbReference type="KEGG" id="ncr:NCU02133"/>
<dbReference type="VEuPathDB" id="FungiDB:NCU02133"/>
<dbReference type="HOGENOM" id="CLU_056632_4_1_1"/>
<dbReference type="InParanoid" id="P07509"/>
<dbReference type="OrthoDB" id="2015551at2759"/>
<dbReference type="Proteomes" id="UP000001805">
    <property type="component" value="Chromosome 1, Linkage Group I"/>
</dbReference>
<dbReference type="GO" id="GO:0005829">
    <property type="term" value="C:cytosol"/>
    <property type="evidence" value="ECO:0007669"/>
    <property type="project" value="EnsemblFungi"/>
</dbReference>
<dbReference type="GO" id="GO:0005758">
    <property type="term" value="C:mitochondrial intermembrane space"/>
    <property type="evidence" value="ECO:0007669"/>
    <property type="project" value="EnsemblFungi"/>
</dbReference>
<dbReference type="GO" id="GO:0005634">
    <property type="term" value="C:nucleus"/>
    <property type="evidence" value="ECO:0007669"/>
    <property type="project" value="EnsemblFungi"/>
</dbReference>
<dbReference type="GO" id="GO:1902693">
    <property type="term" value="C:superoxide dismutase complex"/>
    <property type="evidence" value="ECO:0007669"/>
    <property type="project" value="EnsemblFungi"/>
</dbReference>
<dbReference type="GO" id="GO:0005507">
    <property type="term" value="F:copper ion binding"/>
    <property type="evidence" value="ECO:0000318"/>
    <property type="project" value="GO_Central"/>
</dbReference>
<dbReference type="GO" id="GO:0016670">
    <property type="term" value="F:oxidoreductase activity, acting on a sulfur group of donors, oxygen as acceptor"/>
    <property type="evidence" value="ECO:0007669"/>
    <property type="project" value="EnsemblFungi"/>
</dbReference>
<dbReference type="GO" id="GO:0004784">
    <property type="term" value="F:superoxide dismutase activity"/>
    <property type="evidence" value="ECO:0000318"/>
    <property type="project" value="GO_Central"/>
</dbReference>
<dbReference type="GO" id="GO:0045454">
    <property type="term" value="P:cell redox homeostasis"/>
    <property type="evidence" value="ECO:0007669"/>
    <property type="project" value="EnsemblFungi"/>
</dbReference>
<dbReference type="GO" id="GO:0006825">
    <property type="term" value="P:copper ion transport"/>
    <property type="evidence" value="ECO:0007669"/>
    <property type="project" value="EnsemblFungi"/>
</dbReference>
<dbReference type="GO" id="GO:0031505">
    <property type="term" value="P:fungal-type cell wall organization"/>
    <property type="evidence" value="ECO:0007669"/>
    <property type="project" value="EnsemblFungi"/>
</dbReference>
<dbReference type="GO" id="GO:0006878">
    <property type="term" value="P:intracellular copper ion homeostasis"/>
    <property type="evidence" value="ECO:0007669"/>
    <property type="project" value="EnsemblFungi"/>
</dbReference>
<dbReference type="GO" id="GO:0006882">
    <property type="term" value="P:intracellular zinc ion homeostasis"/>
    <property type="evidence" value="ECO:0007669"/>
    <property type="project" value="EnsemblFungi"/>
</dbReference>
<dbReference type="GO" id="GO:1901856">
    <property type="term" value="P:negative regulation of cellular respiration"/>
    <property type="evidence" value="ECO:0007669"/>
    <property type="project" value="EnsemblFungi"/>
</dbReference>
<dbReference type="GO" id="GO:0045944">
    <property type="term" value="P:positive regulation of transcription by RNA polymerase II"/>
    <property type="evidence" value="ECO:0007669"/>
    <property type="project" value="EnsemblFungi"/>
</dbReference>
<dbReference type="GO" id="GO:0050821">
    <property type="term" value="P:protein stabilization"/>
    <property type="evidence" value="ECO:0007669"/>
    <property type="project" value="EnsemblFungi"/>
</dbReference>
<dbReference type="GO" id="GO:0019430">
    <property type="term" value="P:removal of superoxide radicals"/>
    <property type="evidence" value="ECO:0000318"/>
    <property type="project" value="GO_Central"/>
</dbReference>
<dbReference type="CDD" id="cd00305">
    <property type="entry name" value="Cu-Zn_Superoxide_Dismutase"/>
    <property type="match status" value="1"/>
</dbReference>
<dbReference type="FunFam" id="2.60.40.200:FF:000001">
    <property type="entry name" value="Superoxide dismutase [Cu-Zn]"/>
    <property type="match status" value="1"/>
</dbReference>
<dbReference type="Gene3D" id="2.60.40.200">
    <property type="entry name" value="Superoxide dismutase, copper/zinc binding domain"/>
    <property type="match status" value="1"/>
</dbReference>
<dbReference type="InterPro" id="IPR036423">
    <property type="entry name" value="SOD-like_Cu/Zn_dom_sf"/>
</dbReference>
<dbReference type="InterPro" id="IPR024134">
    <property type="entry name" value="SOD_Cu/Zn_/chaperone"/>
</dbReference>
<dbReference type="InterPro" id="IPR018152">
    <property type="entry name" value="SOD_Cu/Zn_BS"/>
</dbReference>
<dbReference type="InterPro" id="IPR001424">
    <property type="entry name" value="SOD_Cu_Zn_dom"/>
</dbReference>
<dbReference type="PANTHER" id="PTHR10003">
    <property type="entry name" value="SUPEROXIDE DISMUTASE CU-ZN -RELATED"/>
    <property type="match status" value="1"/>
</dbReference>
<dbReference type="Pfam" id="PF00080">
    <property type="entry name" value="Sod_Cu"/>
    <property type="match status" value="1"/>
</dbReference>
<dbReference type="PRINTS" id="PR00068">
    <property type="entry name" value="CUZNDISMTASE"/>
</dbReference>
<dbReference type="SUPFAM" id="SSF49329">
    <property type="entry name" value="Cu,Zn superoxide dismutase-like"/>
    <property type="match status" value="1"/>
</dbReference>
<dbReference type="PROSITE" id="PS00087">
    <property type="entry name" value="SOD_CU_ZN_1"/>
    <property type="match status" value="1"/>
</dbReference>
<dbReference type="PROSITE" id="PS00332">
    <property type="entry name" value="SOD_CU_ZN_2"/>
    <property type="match status" value="1"/>
</dbReference>
<keyword id="KW-0049">Antioxidant</keyword>
<keyword id="KW-0186">Copper</keyword>
<keyword id="KW-0963">Cytoplasm</keyword>
<keyword id="KW-0903">Direct protein sequencing</keyword>
<keyword id="KW-1015">Disulfide bond</keyword>
<keyword id="KW-0479">Metal-binding</keyword>
<keyword id="KW-0560">Oxidoreductase</keyword>
<keyword id="KW-1185">Reference proteome</keyword>
<keyword id="KW-0862">Zinc</keyword>
<accession>P07509</accession>
<accession>Q7RVK2</accession>
<comment type="function">
    <text evidence="1">Destroys radicals which are normally produced within the cells and which are toxic to biological systems.</text>
</comment>
<comment type="catalytic activity">
    <reaction evidence="3">
        <text>2 superoxide + 2 H(+) = H2O2 + O2</text>
        <dbReference type="Rhea" id="RHEA:20696"/>
        <dbReference type="ChEBI" id="CHEBI:15378"/>
        <dbReference type="ChEBI" id="CHEBI:15379"/>
        <dbReference type="ChEBI" id="CHEBI:16240"/>
        <dbReference type="ChEBI" id="CHEBI:18421"/>
        <dbReference type="EC" id="1.15.1.1"/>
    </reaction>
</comment>
<comment type="cofactor">
    <cofactor evidence="2">
        <name>Cu cation</name>
        <dbReference type="ChEBI" id="CHEBI:23378"/>
    </cofactor>
    <text evidence="2">Binds 1 copper ion per subunit.</text>
</comment>
<comment type="cofactor">
    <cofactor evidence="2">
        <name>Zn(2+)</name>
        <dbReference type="ChEBI" id="CHEBI:29105"/>
    </cofactor>
    <text evidence="2">Binds 1 zinc ion per subunit.</text>
</comment>
<comment type="subunit">
    <text evidence="3">Homodimer.</text>
</comment>
<comment type="subcellular location">
    <subcellularLocation>
        <location evidence="2">Cytoplasm</location>
    </subcellularLocation>
</comment>
<comment type="similarity">
    <text evidence="6">Belongs to the Cu-Zn superoxide dismutase family.</text>
</comment>
<proteinExistence type="evidence at protein level"/>
<organism>
    <name type="scientific">Neurospora crassa (strain ATCC 24698 / 74-OR23-1A / CBS 708.71 / DSM 1257 / FGSC 987)</name>
    <dbReference type="NCBI Taxonomy" id="367110"/>
    <lineage>
        <taxon>Eukaryota</taxon>
        <taxon>Fungi</taxon>
        <taxon>Dikarya</taxon>
        <taxon>Ascomycota</taxon>
        <taxon>Pezizomycotina</taxon>
        <taxon>Sordariomycetes</taxon>
        <taxon>Sordariomycetidae</taxon>
        <taxon>Sordariales</taxon>
        <taxon>Sordariaceae</taxon>
        <taxon>Neurospora</taxon>
    </lineage>
</organism>
<name>SODC_NEUCR</name>
<feature type="initiator methionine" description="Removed" evidence="5">
    <location>
        <position position="1"/>
    </location>
</feature>
<feature type="chain" id="PRO_0000164123" description="Superoxide dismutase [Cu-Zn]">
    <location>
        <begin position="2"/>
        <end position="154"/>
    </location>
</feature>
<feature type="region of interest" description="Disordered" evidence="4">
    <location>
        <begin position="125"/>
        <end position="144"/>
    </location>
</feature>
<feature type="compositionally biased region" description="Basic and acidic residues" evidence="4">
    <location>
        <begin position="125"/>
        <end position="136"/>
    </location>
</feature>
<feature type="binding site" evidence="2">
    <location>
        <position position="47"/>
    </location>
    <ligand>
        <name>Cu cation</name>
        <dbReference type="ChEBI" id="CHEBI:23378"/>
        <note>catalytic</note>
    </ligand>
</feature>
<feature type="binding site" evidence="2">
    <location>
        <position position="49"/>
    </location>
    <ligand>
        <name>Cu cation</name>
        <dbReference type="ChEBI" id="CHEBI:23378"/>
        <note>catalytic</note>
    </ligand>
</feature>
<feature type="binding site" evidence="2">
    <location>
        <position position="64"/>
    </location>
    <ligand>
        <name>Cu cation</name>
        <dbReference type="ChEBI" id="CHEBI:23378"/>
        <note>catalytic</note>
    </ligand>
</feature>
<feature type="binding site" evidence="2">
    <location>
        <position position="64"/>
    </location>
    <ligand>
        <name>Zn(2+)</name>
        <dbReference type="ChEBI" id="CHEBI:29105"/>
        <note>structural</note>
    </ligand>
</feature>
<feature type="binding site" evidence="2">
    <location>
        <position position="72"/>
    </location>
    <ligand>
        <name>Zn(2+)</name>
        <dbReference type="ChEBI" id="CHEBI:29105"/>
        <note>structural</note>
    </ligand>
</feature>
<feature type="binding site" evidence="2">
    <location>
        <position position="81"/>
    </location>
    <ligand>
        <name>Zn(2+)</name>
        <dbReference type="ChEBI" id="CHEBI:29105"/>
        <note>structural</note>
    </ligand>
</feature>
<feature type="binding site" evidence="2">
    <location>
        <position position="84"/>
    </location>
    <ligand>
        <name>Zn(2+)</name>
        <dbReference type="ChEBI" id="CHEBI:29105"/>
        <note>structural</note>
    </ligand>
</feature>
<feature type="binding site" evidence="2">
    <location>
        <position position="121"/>
    </location>
    <ligand>
        <name>Cu cation</name>
        <dbReference type="ChEBI" id="CHEBI:23378"/>
        <note>catalytic</note>
    </ligand>
</feature>
<feature type="binding site" evidence="2">
    <location>
        <position position="144"/>
    </location>
    <ligand>
        <name>substrate</name>
    </ligand>
</feature>
<feature type="disulfide bond" evidence="2">
    <location>
        <begin position="58"/>
        <end position="147"/>
    </location>
</feature>
<feature type="sequence conflict" description="In Ref. 3; AA sequence." evidence="6" ref="3">
    <original>T</original>
    <variation>A</variation>
    <location>
        <position position="70"/>
    </location>
</feature>
<gene>
    <name type="primary">sod-1</name>
    <name type="ORF">NCU02133</name>
</gene>
<protein>
    <recommendedName>
        <fullName>Superoxide dismutase [Cu-Zn]</fullName>
        <ecNumber evidence="3">1.15.1.1</ecNumber>
    </recommendedName>
</protein>